<organism>
    <name type="scientific">Burkholderia mallei (strain NCTC 10247)</name>
    <dbReference type="NCBI Taxonomy" id="320389"/>
    <lineage>
        <taxon>Bacteria</taxon>
        <taxon>Pseudomonadati</taxon>
        <taxon>Pseudomonadota</taxon>
        <taxon>Betaproteobacteria</taxon>
        <taxon>Burkholderiales</taxon>
        <taxon>Burkholderiaceae</taxon>
        <taxon>Burkholderia</taxon>
        <taxon>pseudomallei group</taxon>
    </lineage>
</organism>
<sequence length="246" mass="27494">MKPSQVRSKAFAMPLTSPAFPMGPYRFVNREFLIITYRTDMDRLREIVPEPLEVKEPLVHYEFIRMPDSTGFGDYTESGQVIPVEYKGQPGGYTLAMYLNDHPPIAGGRELWGFPKKLAQPTLQTHIDTLLGTLDYGPVRVATGTMGYKHQELDLEEQAKRLAGANFLLKIIPHVDGSARVCELVRYYLQDIEMKGAWTGPASLQLAPHALAPVADLPVLEIVEARHLLADLTLGLGEVVYDYLAQ</sequence>
<evidence type="ECO:0000255" key="1">
    <source>
        <dbReference type="HAMAP-Rule" id="MF_00597"/>
    </source>
</evidence>
<name>ADC_BURM7</name>
<accession>A3MAE3</accession>
<protein>
    <recommendedName>
        <fullName evidence="1">Acetoacetate decarboxylase</fullName>
        <shortName evidence="1">AAD</shortName>
        <shortName evidence="1">ADC</shortName>
        <ecNumber evidence="1">4.1.1.4</ecNumber>
    </recommendedName>
</protein>
<dbReference type="EC" id="4.1.1.4" evidence="1"/>
<dbReference type="EMBL" id="CP000547">
    <property type="protein sequence ID" value="ABO01780.1"/>
    <property type="molecule type" value="Genomic_DNA"/>
</dbReference>
<dbReference type="RefSeq" id="WP_004194452.1">
    <property type="nucleotide sequence ID" value="NZ_CP007801.1"/>
</dbReference>
<dbReference type="SMR" id="A3MAE3"/>
<dbReference type="KEGG" id="bmaz:BM44_3641"/>
<dbReference type="KEGG" id="bmn:BMA10247_A0022"/>
<dbReference type="PATRIC" id="fig|320389.8.peg.4115"/>
<dbReference type="GO" id="GO:0047602">
    <property type="term" value="F:acetoacetate decarboxylase activity"/>
    <property type="evidence" value="ECO:0007669"/>
    <property type="project" value="UniProtKB-UniRule"/>
</dbReference>
<dbReference type="Gene3D" id="2.40.400.10">
    <property type="entry name" value="Acetoacetate decarboxylase-like"/>
    <property type="match status" value="1"/>
</dbReference>
<dbReference type="HAMAP" id="MF_00597">
    <property type="entry name" value="ADC"/>
    <property type="match status" value="1"/>
</dbReference>
<dbReference type="InterPro" id="IPR010451">
    <property type="entry name" value="Acetoacetate_decarboxylase"/>
</dbReference>
<dbReference type="InterPro" id="IPR023653">
    <property type="entry name" value="Acetoacetate_decarboxylase_bac"/>
</dbReference>
<dbReference type="InterPro" id="IPR023375">
    <property type="entry name" value="ADC_dom_sf"/>
</dbReference>
<dbReference type="NCBIfam" id="NF002614">
    <property type="entry name" value="PRK02265.1"/>
    <property type="match status" value="1"/>
</dbReference>
<dbReference type="Pfam" id="PF06314">
    <property type="entry name" value="ADC"/>
    <property type="match status" value="1"/>
</dbReference>
<dbReference type="SUPFAM" id="SSF160104">
    <property type="entry name" value="Acetoacetate decarboxylase-like"/>
    <property type="match status" value="1"/>
</dbReference>
<reference key="1">
    <citation type="journal article" date="2010" name="Genome Biol. Evol.">
        <title>Continuing evolution of Burkholderia mallei through genome reduction and large-scale rearrangements.</title>
        <authorList>
            <person name="Losada L."/>
            <person name="Ronning C.M."/>
            <person name="DeShazer D."/>
            <person name="Woods D."/>
            <person name="Fedorova N."/>
            <person name="Kim H.S."/>
            <person name="Shabalina S.A."/>
            <person name="Pearson T.R."/>
            <person name="Brinkac L."/>
            <person name="Tan P."/>
            <person name="Nandi T."/>
            <person name="Crabtree J."/>
            <person name="Badger J."/>
            <person name="Beckstrom-Sternberg S."/>
            <person name="Saqib M."/>
            <person name="Schutzer S.E."/>
            <person name="Keim P."/>
            <person name="Nierman W.C."/>
        </authorList>
    </citation>
    <scope>NUCLEOTIDE SEQUENCE [LARGE SCALE GENOMIC DNA]</scope>
    <source>
        <strain>NCTC 10247</strain>
    </source>
</reference>
<comment type="function">
    <text evidence="1">Catalyzes the conversion of acetoacetate to acetone and carbon dioxide.</text>
</comment>
<comment type="catalytic activity">
    <reaction evidence="1">
        <text>acetoacetate + H(+) = acetone + CO2</text>
        <dbReference type="Rhea" id="RHEA:19729"/>
        <dbReference type="ChEBI" id="CHEBI:13705"/>
        <dbReference type="ChEBI" id="CHEBI:15347"/>
        <dbReference type="ChEBI" id="CHEBI:15378"/>
        <dbReference type="ChEBI" id="CHEBI:16526"/>
        <dbReference type="EC" id="4.1.1.4"/>
    </reaction>
</comment>
<comment type="similarity">
    <text evidence="1">Belongs to the ADC family.</text>
</comment>
<proteinExistence type="inferred from homology"/>
<keyword id="KW-0210">Decarboxylase</keyword>
<keyword id="KW-0456">Lyase</keyword>
<keyword id="KW-0704">Schiff base</keyword>
<gene>
    <name evidence="1" type="primary">adc</name>
    <name type="ordered locus">BMA10247_A0022</name>
</gene>
<feature type="chain" id="PRO_1000025634" description="Acetoacetate decarboxylase">
    <location>
        <begin position="1"/>
        <end position="246"/>
    </location>
</feature>
<feature type="active site" description="Schiff-base intermediate with acetoacetate" evidence="1">
    <location>
        <position position="116"/>
    </location>
</feature>